<keyword id="KW-0997">Cell inner membrane</keyword>
<keyword id="KW-1003">Cell membrane</keyword>
<keyword id="KW-0342">GTP-binding</keyword>
<keyword id="KW-0378">Hydrolase</keyword>
<keyword id="KW-0472">Membrane</keyword>
<keyword id="KW-0547">Nucleotide-binding</keyword>
<keyword id="KW-0648">Protein biosynthesis</keyword>
<gene>
    <name evidence="1" type="primary">lepA</name>
    <name type="ordered locus">RPC_0591</name>
</gene>
<accession>Q21BS0</accession>
<reference key="1">
    <citation type="submission" date="2006-03" db="EMBL/GenBank/DDBJ databases">
        <title>Complete sequence of Rhodopseudomonas palustris BisB18.</title>
        <authorList>
            <consortium name="US DOE Joint Genome Institute"/>
            <person name="Copeland A."/>
            <person name="Lucas S."/>
            <person name="Lapidus A."/>
            <person name="Barry K."/>
            <person name="Detter J.C."/>
            <person name="Glavina del Rio T."/>
            <person name="Hammon N."/>
            <person name="Israni S."/>
            <person name="Dalin E."/>
            <person name="Tice H."/>
            <person name="Pitluck S."/>
            <person name="Chain P."/>
            <person name="Malfatti S."/>
            <person name="Shin M."/>
            <person name="Vergez L."/>
            <person name="Schmutz J."/>
            <person name="Larimer F."/>
            <person name="Land M."/>
            <person name="Hauser L."/>
            <person name="Pelletier D.A."/>
            <person name="Kyrpides N."/>
            <person name="Anderson I."/>
            <person name="Oda Y."/>
            <person name="Harwood C.S."/>
            <person name="Richardson P."/>
        </authorList>
    </citation>
    <scope>NUCLEOTIDE SEQUENCE [LARGE SCALE GENOMIC DNA]</scope>
    <source>
        <strain>BisB18</strain>
    </source>
</reference>
<proteinExistence type="inferred from homology"/>
<dbReference type="EC" id="3.6.5.n1" evidence="1"/>
<dbReference type="EMBL" id="CP000301">
    <property type="protein sequence ID" value="ABD86166.1"/>
    <property type="status" value="ALT_INIT"/>
    <property type="molecule type" value="Genomic_DNA"/>
</dbReference>
<dbReference type="SMR" id="Q21BS0"/>
<dbReference type="STRING" id="316056.RPC_0591"/>
<dbReference type="KEGG" id="rpc:RPC_0591"/>
<dbReference type="eggNOG" id="COG0481">
    <property type="taxonomic scope" value="Bacteria"/>
</dbReference>
<dbReference type="HOGENOM" id="CLU_009995_3_3_5"/>
<dbReference type="OrthoDB" id="9802948at2"/>
<dbReference type="GO" id="GO:0005886">
    <property type="term" value="C:plasma membrane"/>
    <property type="evidence" value="ECO:0007669"/>
    <property type="project" value="UniProtKB-SubCell"/>
</dbReference>
<dbReference type="GO" id="GO:0005525">
    <property type="term" value="F:GTP binding"/>
    <property type="evidence" value="ECO:0007669"/>
    <property type="project" value="UniProtKB-UniRule"/>
</dbReference>
<dbReference type="GO" id="GO:0003924">
    <property type="term" value="F:GTPase activity"/>
    <property type="evidence" value="ECO:0007669"/>
    <property type="project" value="UniProtKB-UniRule"/>
</dbReference>
<dbReference type="GO" id="GO:0097216">
    <property type="term" value="F:guanosine tetraphosphate binding"/>
    <property type="evidence" value="ECO:0007669"/>
    <property type="project" value="UniProtKB-ARBA"/>
</dbReference>
<dbReference type="GO" id="GO:0043022">
    <property type="term" value="F:ribosome binding"/>
    <property type="evidence" value="ECO:0007669"/>
    <property type="project" value="UniProtKB-UniRule"/>
</dbReference>
<dbReference type="GO" id="GO:0003746">
    <property type="term" value="F:translation elongation factor activity"/>
    <property type="evidence" value="ECO:0007669"/>
    <property type="project" value="UniProtKB-UniRule"/>
</dbReference>
<dbReference type="GO" id="GO:0045727">
    <property type="term" value="P:positive regulation of translation"/>
    <property type="evidence" value="ECO:0007669"/>
    <property type="project" value="UniProtKB-UniRule"/>
</dbReference>
<dbReference type="CDD" id="cd16260">
    <property type="entry name" value="EF4_III"/>
    <property type="match status" value="1"/>
</dbReference>
<dbReference type="CDD" id="cd01890">
    <property type="entry name" value="LepA"/>
    <property type="match status" value="1"/>
</dbReference>
<dbReference type="CDD" id="cd03709">
    <property type="entry name" value="lepA_C"/>
    <property type="match status" value="1"/>
</dbReference>
<dbReference type="FunFam" id="3.40.50.300:FF:000078">
    <property type="entry name" value="Elongation factor 4"/>
    <property type="match status" value="1"/>
</dbReference>
<dbReference type="FunFam" id="2.40.30.10:FF:000015">
    <property type="entry name" value="Translation factor GUF1, mitochondrial"/>
    <property type="match status" value="1"/>
</dbReference>
<dbReference type="FunFam" id="3.30.70.240:FF:000007">
    <property type="entry name" value="Translation factor GUF1, mitochondrial"/>
    <property type="match status" value="1"/>
</dbReference>
<dbReference type="FunFam" id="3.30.70.2570:FF:000001">
    <property type="entry name" value="Translation factor GUF1, mitochondrial"/>
    <property type="match status" value="1"/>
</dbReference>
<dbReference type="FunFam" id="3.30.70.870:FF:000004">
    <property type="entry name" value="Translation factor GUF1, mitochondrial"/>
    <property type="match status" value="1"/>
</dbReference>
<dbReference type="Gene3D" id="3.30.70.240">
    <property type="match status" value="1"/>
</dbReference>
<dbReference type="Gene3D" id="3.30.70.2570">
    <property type="entry name" value="Elongation factor 4, C-terminal domain"/>
    <property type="match status" value="1"/>
</dbReference>
<dbReference type="Gene3D" id="3.30.70.870">
    <property type="entry name" value="Elongation Factor G (Translational Gtpase), domain 3"/>
    <property type="match status" value="1"/>
</dbReference>
<dbReference type="Gene3D" id="3.40.50.300">
    <property type="entry name" value="P-loop containing nucleotide triphosphate hydrolases"/>
    <property type="match status" value="1"/>
</dbReference>
<dbReference type="Gene3D" id="2.40.30.10">
    <property type="entry name" value="Translation factors"/>
    <property type="match status" value="1"/>
</dbReference>
<dbReference type="HAMAP" id="MF_00071">
    <property type="entry name" value="LepA"/>
    <property type="match status" value="1"/>
</dbReference>
<dbReference type="InterPro" id="IPR006297">
    <property type="entry name" value="EF-4"/>
</dbReference>
<dbReference type="InterPro" id="IPR035647">
    <property type="entry name" value="EFG_III/V"/>
</dbReference>
<dbReference type="InterPro" id="IPR000640">
    <property type="entry name" value="EFG_V-like"/>
</dbReference>
<dbReference type="InterPro" id="IPR004161">
    <property type="entry name" value="EFTu-like_2"/>
</dbReference>
<dbReference type="InterPro" id="IPR031157">
    <property type="entry name" value="G_TR_CS"/>
</dbReference>
<dbReference type="InterPro" id="IPR038363">
    <property type="entry name" value="LepA_C_sf"/>
</dbReference>
<dbReference type="InterPro" id="IPR013842">
    <property type="entry name" value="LepA_CTD"/>
</dbReference>
<dbReference type="InterPro" id="IPR035654">
    <property type="entry name" value="LepA_IV"/>
</dbReference>
<dbReference type="InterPro" id="IPR027417">
    <property type="entry name" value="P-loop_NTPase"/>
</dbReference>
<dbReference type="InterPro" id="IPR005225">
    <property type="entry name" value="Small_GTP-bd"/>
</dbReference>
<dbReference type="InterPro" id="IPR000795">
    <property type="entry name" value="T_Tr_GTP-bd_dom"/>
</dbReference>
<dbReference type="NCBIfam" id="TIGR01393">
    <property type="entry name" value="lepA"/>
    <property type="match status" value="1"/>
</dbReference>
<dbReference type="NCBIfam" id="TIGR00231">
    <property type="entry name" value="small_GTP"/>
    <property type="match status" value="1"/>
</dbReference>
<dbReference type="PANTHER" id="PTHR43512:SF4">
    <property type="entry name" value="TRANSLATION FACTOR GUF1 HOMOLOG, CHLOROPLASTIC"/>
    <property type="match status" value="1"/>
</dbReference>
<dbReference type="PANTHER" id="PTHR43512">
    <property type="entry name" value="TRANSLATION FACTOR GUF1-RELATED"/>
    <property type="match status" value="1"/>
</dbReference>
<dbReference type="Pfam" id="PF00679">
    <property type="entry name" value="EFG_C"/>
    <property type="match status" value="1"/>
</dbReference>
<dbReference type="Pfam" id="PF00009">
    <property type="entry name" value="GTP_EFTU"/>
    <property type="match status" value="1"/>
</dbReference>
<dbReference type="Pfam" id="PF03144">
    <property type="entry name" value="GTP_EFTU_D2"/>
    <property type="match status" value="1"/>
</dbReference>
<dbReference type="Pfam" id="PF06421">
    <property type="entry name" value="LepA_C"/>
    <property type="match status" value="1"/>
</dbReference>
<dbReference type="PRINTS" id="PR00315">
    <property type="entry name" value="ELONGATNFCT"/>
</dbReference>
<dbReference type="SMART" id="SM00838">
    <property type="entry name" value="EFG_C"/>
    <property type="match status" value="1"/>
</dbReference>
<dbReference type="SUPFAM" id="SSF54980">
    <property type="entry name" value="EF-G C-terminal domain-like"/>
    <property type="match status" value="2"/>
</dbReference>
<dbReference type="SUPFAM" id="SSF52540">
    <property type="entry name" value="P-loop containing nucleoside triphosphate hydrolases"/>
    <property type="match status" value="1"/>
</dbReference>
<dbReference type="PROSITE" id="PS00301">
    <property type="entry name" value="G_TR_1"/>
    <property type="match status" value="1"/>
</dbReference>
<dbReference type="PROSITE" id="PS51722">
    <property type="entry name" value="G_TR_2"/>
    <property type="match status" value="1"/>
</dbReference>
<comment type="function">
    <text evidence="1">Required for accurate and efficient protein synthesis under certain stress conditions. May act as a fidelity factor of the translation reaction, by catalyzing a one-codon backward translocation of tRNAs on improperly translocated ribosomes. Back-translocation proceeds from a post-translocation (POST) complex to a pre-translocation (PRE) complex, thus giving elongation factor G a second chance to translocate the tRNAs correctly. Binds to ribosomes in a GTP-dependent manner.</text>
</comment>
<comment type="catalytic activity">
    <reaction evidence="1">
        <text>GTP + H2O = GDP + phosphate + H(+)</text>
        <dbReference type="Rhea" id="RHEA:19669"/>
        <dbReference type="ChEBI" id="CHEBI:15377"/>
        <dbReference type="ChEBI" id="CHEBI:15378"/>
        <dbReference type="ChEBI" id="CHEBI:37565"/>
        <dbReference type="ChEBI" id="CHEBI:43474"/>
        <dbReference type="ChEBI" id="CHEBI:58189"/>
        <dbReference type="EC" id="3.6.5.n1"/>
    </reaction>
</comment>
<comment type="subcellular location">
    <subcellularLocation>
        <location evidence="1">Cell inner membrane</location>
        <topology evidence="1">Peripheral membrane protein</topology>
        <orientation evidence="1">Cytoplasmic side</orientation>
    </subcellularLocation>
</comment>
<comment type="similarity">
    <text evidence="1">Belongs to the TRAFAC class translation factor GTPase superfamily. Classic translation factor GTPase family. LepA subfamily.</text>
</comment>
<comment type="sequence caution" evidence="2">
    <conflict type="erroneous initiation">
        <sequence resource="EMBL-CDS" id="ABD86166"/>
    </conflict>
</comment>
<organism>
    <name type="scientific">Rhodopseudomonas palustris (strain BisB18)</name>
    <dbReference type="NCBI Taxonomy" id="316056"/>
    <lineage>
        <taxon>Bacteria</taxon>
        <taxon>Pseudomonadati</taxon>
        <taxon>Pseudomonadota</taxon>
        <taxon>Alphaproteobacteria</taxon>
        <taxon>Hyphomicrobiales</taxon>
        <taxon>Nitrobacteraceae</taxon>
        <taxon>Rhodopseudomonas</taxon>
    </lineage>
</organism>
<protein>
    <recommendedName>
        <fullName evidence="1">Elongation factor 4</fullName>
        <shortName evidence="1">EF-4</shortName>
        <ecNumber evidence="1">3.6.5.n1</ecNumber>
    </recommendedName>
    <alternativeName>
        <fullName evidence="1">Ribosomal back-translocase LepA</fullName>
    </alternativeName>
</protein>
<evidence type="ECO:0000255" key="1">
    <source>
        <dbReference type="HAMAP-Rule" id="MF_00071"/>
    </source>
</evidence>
<evidence type="ECO:0000305" key="2"/>
<sequence length="601" mass="66739">MTTVPISNIRNFSIVAHIDHGKSTLADRLIQTTGGLQAREMKEQVLDSMDIERERGITIKAQTVRLNYHAQDGRDYIFNLMDTPGHVDFAYEVSRSLAACEGSLLVVDASQGVEAQTLANVYHALDAGHEIVPVLNKVDLPAAEPEQVRQQIEDVIGIDASEAVMISAKTGLGIDLVLEAIVHRLPPPQGDREAPLKALLVDSWYDVYLGVVVLVRVVDGVMKKGQRIRMMGTNAAYDLERVGFFTPKMTQVDELGPGEIGFITAGIKEVADTRVGDTITDDKKPVTEMLPGFKPAVPVVFCGLFPVDADDFETLRAAMGKLRLNDASFSFEMETSAALGFGFRCGFLGLLHLEIIQERLSREFDLNLIATAPSVIYKMHLTDGTELEIHNPIDMPDVVKIAEIQEPWIEATILTPDEYLGSVLKLCQDRRGTQKELTYVGSRAMVKYNLPLNEVVFDFYDRLKSVSKGYASFDYHLTDYQPADLVKMQILVNAEPVDALSMLVHRTRAEGRGRAMVEKMKELIPPHMFVIPIQAAIGGKIIARETVRALRKDVTAKCYGGDITRKRKLLEKQKEGKKKMRQFGKVDIPQEAFIAALKVDS</sequence>
<feature type="chain" id="PRO_0000265693" description="Elongation factor 4">
    <location>
        <begin position="1"/>
        <end position="601"/>
    </location>
</feature>
<feature type="domain" description="tr-type G">
    <location>
        <begin position="7"/>
        <end position="189"/>
    </location>
</feature>
<feature type="binding site" evidence="1">
    <location>
        <begin position="19"/>
        <end position="24"/>
    </location>
    <ligand>
        <name>GTP</name>
        <dbReference type="ChEBI" id="CHEBI:37565"/>
    </ligand>
</feature>
<feature type="binding site" evidence="1">
    <location>
        <begin position="136"/>
        <end position="139"/>
    </location>
    <ligand>
        <name>GTP</name>
        <dbReference type="ChEBI" id="CHEBI:37565"/>
    </ligand>
</feature>
<name>LEPA_RHOPB</name>